<evidence type="ECO:0000250" key="1"/>
<evidence type="ECO:0000255" key="2">
    <source>
        <dbReference type="PROSITE-ProRule" id="PRU00609"/>
    </source>
</evidence>
<feature type="initiator methionine" description="Removed" evidence="1">
    <location>
        <position position="1"/>
    </location>
</feature>
<feature type="chain" id="PRO_0000056929" description="Asparagine synthetase [glutamine-hydrolyzing]">
    <location>
        <begin position="2"/>
        <end position="586"/>
    </location>
</feature>
<feature type="domain" description="Glutamine amidotransferase type-2" evidence="2">
    <location>
        <begin position="2"/>
        <end position="185"/>
    </location>
</feature>
<feature type="domain" description="Asparagine synthetase">
    <location>
        <begin position="193"/>
        <end position="516"/>
    </location>
</feature>
<feature type="active site" description="For GATase activity" evidence="1">
    <location>
        <position position="2"/>
    </location>
</feature>
<feature type="binding site" evidence="1">
    <location>
        <begin position="50"/>
        <end position="54"/>
    </location>
    <ligand>
        <name>L-glutamine</name>
        <dbReference type="ChEBI" id="CHEBI:58359"/>
    </ligand>
</feature>
<feature type="binding site" evidence="1">
    <location>
        <begin position="75"/>
        <end position="77"/>
    </location>
    <ligand>
        <name>L-glutamine</name>
        <dbReference type="ChEBI" id="CHEBI:58359"/>
    </ligand>
</feature>
<feature type="binding site" evidence="1">
    <location>
        <position position="98"/>
    </location>
    <ligand>
        <name>L-glutamine</name>
        <dbReference type="ChEBI" id="CHEBI:58359"/>
    </ligand>
</feature>
<feature type="binding site" evidence="1">
    <location>
        <position position="231"/>
    </location>
    <ligand>
        <name>ATP</name>
        <dbReference type="ChEBI" id="CHEBI:30616"/>
    </ligand>
</feature>
<feature type="binding site" evidence="1">
    <location>
        <position position="267"/>
    </location>
    <ligand>
        <name>ATP</name>
        <dbReference type="ChEBI" id="CHEBI:30616"/>
    </ligand>
</feature>
<feature type="binding site" evidence="1">
    <location>
        <begin position="341"/>
        <end position="342"/>
    </location>
    <ligand>
        <name>ATP</name>
        <dbReference type="ChEBI" id="CHEBI:30616"/>
    </ligand>
</feature>
<feature type="site" description="Important for beta-aspartyl-AMP intermediate formation" evidence="1">
    <location>
        <position position="343"/>
    </location>
</feature>
<comment type="catalytic activity">
    <reaction>
        <text>L-aspartate + L-glutamine + ATP + H2O = L-asparagine + L-glutamate + AMP + diphosphate + H(+)</text>
        <dbReference type="Rhea" id="RHEA:12228"/>
        <dbReference type="ChEBI" id="CHEBI:15377"/>
        <dbReference type="ChEBI" id="CHEBI:15378"/>
        <dbReference type="ChEBI" id="CHEBI:29985"/>
        <dbReference type="ChEBI" id="CHEBI:29991"/>
        <dbReference type="ChEBI" id="CHEBI:30616"/>
        <dbReference type="ChEBI" id="CHEBI:33019"/>
        <dbReference type="ChEBI" id="CHEBI:58048"/>
        <dbReference type="ChEBI" id="CHEBI:58359"/>
        <dbReference type="ChEBI" id="CHEBI:456215"/>
        <dbReference type="EC" id="6.3.5.4"/>
    </reaction>
</comment>
<comment type="pathway">
    <text>Amino-acid biosynthesis; L-asparagine biosynthesis; L-asparagine from L-aspartate (L-Gln route): step 1/1.</text>
</comment>
<keyword id="KW-0028">Amino-acid biosynthesis</keyword>
<keyword id="KW-0061">Asparagine biosynthesis</keyword>
<keyword id="KW-0067">ATP-binding</keyword>
<keyword id="KW-0315">Glutamine amidotransferase</keyword>
<keyword id="KW-0436">Ligase</keyword>
<keyword id="KW-0547">Nucleotide-binding</keyword>
<gene>
    <name type="primary">AS</name>
</gene>
<dbReference type="EC" id="6.3.5.4"/>
<dbReference type="EMBL" id="AF014055">
    <property type="protein sequence ID" value="AAD05033.1"/>
    <property type="molecule type" value="mRNA"/>
</dbReference>
<dbReference type="EMBL" id="AF014056">
    <property type="protein sequence ID" value="AAD05034.1"/>
    <property type="molecule type" value="mRNA"/>
</dbReference>
<dbReference type="EMBL" id="AF014057">
    <property type="protein sequence ID" value="AAD05035.1"/>
    <property type="molecule type" value="mRNA"/>
</dbReference>
<dbReference type="SMR" id="O24661"/>
<dbReference type="UniPathway" id="UPA00134">
    <property type="reaction ID" value="UER00195"/>
</dbReference>
<dbReference type="GO" id="GO:0005829">
    <property type="term" value="C:cytosol"/>
    <property type="evidence" value="ECO:0007669"/>
    <property type="project" value="TreeGrafter"/>
</dbReference>
<dbReference type="GO" id="GO:0004066">
    <property type="term" value="F:asparagine synthase (glutamine-hydrolyzing) activity"/>
    <property type="evidence" value="ECO:0007669"/>
    <property type="project" value="UniProtKB-EC"/>
</dbReference>
<dbReference type="GO" id="GO:0005524">
    <property type="term" value="F:ATP binding"/>
    <property type="evidence" value="ECO:0007669"/>
    <property type="project" value="UniProtKB-KW"/>
</dbReference>
<dbReference type="GO" id="GO:0070981">
    <property type="term" value="P:L-asparagine biosynthetic process"/>
    <property type="evidence" value="ECO:0007669"/>
    <property type="project" value="UniProtKB-UniPathway"/>
</dbReference>
<dbReference type="CDD" id="cd01991">
    <property type="entry name" value="Asn_synthase_B_C"/>
    <property type="match status" value="1"/>
</dbReference>
<dbReference type="CDD" id="cd00712">
    <property type="entry name" value="AsnB"/>
    <property type="match status" value="1"/>
</dbReference>
<dbReference type="FunFam" id="3.40.50.620:FF:000055">
    <property type="entry name" value="Asparagine synthetase [glutamine-hydrolyzing]"/>
    <property type="match status" value="1"/>
</dbReference>
<dbReference type="FunFam" id="3.60.20.10:FF:000024">
    <property type="entry name" value="Asparagine synthetase [glutamine-hydrolyzing]"/>
    <property type="match status" value="1"/>
</dbReference>
<dbReference type="Gene3D" id="3.60.20.10">
    <property type="entry name" value="Glutamine Phosphoribosylpyrophosphate, subunit 1, domain 1"/>
    <property type="match status" value="1"/>
</dbReference>
<dbReference type="Gene3D" id="3.40.50.620">
    <property type="entry name" value="HUPs"/>
    <property type="match status" value="1"/>
</dbReference>
<dbReference type="InterPro" id="IPR006426">
    <property type="entry name" value="Asn_synth_AEB"/>
</dbReference>
<dbReference type="InterPro" id="IPR001962">
    <property type="entry name" value="Asn_synthase"/>
</dbReference>
<dbReference type="InterPro" id="IPR050795">
    <property type="entry name" value="Asn_Synthetase"/>
</dbReference>
<dbReference type="InterPro" id="IPR033738">
    <property type="entry name" value="AsnB_N"/>
</dbReference>
<dbReference type="InterPro" id="IPR017932">
    <property type="entry name" value="GATase_2_dom"/>
</dbReference>
<dbReference type="InterPro" id="IPR029055">
    <property type="entry name" value="Ntn_hydrolases_N"/>
</dbReference>
<dbReference type="InterPro" id="IPR014729">
    <property type="entry name" value="Rossmann-like_a/b/a_fold"/>
</dbReference>
<dbReference type="NCBIfam" id="NF006949">
    <property type="entry name" value="PRK09431.1"/>
    <property type="match status" value="1"/>
</dbReference>
<dbReference type="PANTHER" id="PTHR11772">
    <property type="entry name" value="ASPARAGINE SYNTHETASE"/>
    <property type="match status" value="1"/>
</dbReference>
<dbReference type="PANTHER" id="PTHR11772:SF48">
    <property type="entry name" value="ASPARAGINE SYNTHETASE [GLUTAMINE-HYDROLYZING] 1"/>
    <property type="match status" value="1"/>
</dbReference>
<dbReference type="Pfam" id="PF00733">
    <property type="entry name" value="Asn_synthase"/>
    <property type="match status" value="1"/>
</dbReference>
<dbReference type="Pfam" id="PF13537">
    <property type="entry name" value="GATase_7"/>
    <property type="match status" value="1"/>
</dbReference>
<dbReference type="PIRSF" id="PIRSF001589">
    <property type="entry name" value="Asn_synthetase_glu-h"/>
    <property type="match status" value="1"/>
</dbReference>
<dbReference type="SUPFAM" id="SSF52402">
    <property type="entry name" value="Adenine nucleotide alpha hydrolases-like"/>
    <property type="match status" value="1"/>
</dbReference>
<dbReference type="SUPFAM" id="SSF56235">
    <property type="entry name" value="N-terminal nucleophile aminohydrolases (Ntn hydrolases)"/>
    <property type="match status" value="1"/>
</dbReference>
<dbReference type="PROSITE" id="PS51278">
    <property type="entry name" value="GATASE_TYPE_2"/>
    <property type="match status" value="1"/>
</dbReference>
<reference key="1">
    <citation type="journal article" date="1998" name="Gene">
        <title>Host-root exudates increase gene expression of asparagine synthetase in the roots of a hemiparasitic plant Triphysaria versicolor (Scrophulariaceae).</title>
        <authorList>
            <person name="Delavault P."/>
            <person name="Estabrook E."/>
            <person name="Albrecht H."/>
            <person name="Wrobel R."/>
            <person name="Yoder J.I."/>
        </authorList>
    </citation>
    <scope>NUCLEOTIDE SEQUENCE [MRNA]</scope>
    <source>
        <tissue>Root</tissue>
    </source>
</reference>
<accession>O24661</accession>
<organism>
    <name type="scientific">Triphysaria versicolor</name>
    <name type="common">Yellow owl's clover</name>
    <dbReference type="NCBI Taxonomy" id="64093"/>
    <lineage>
        <taxon>Eukaryota</taxon>
        <taxon>Viridiplantae</taxon>
        <taxon>Streptophyta</taxon>
        <taxon>Embryophyta</taxon>
        <taxon>Tracheophyta</taxon>
        <taxon>Spermatophyta</taxon>
        <taxon>Magnoliopsida</taxon>
        <taxon>eudicotyledons</taxon>
        <taxon>Gunneridae</taxon>
        <taxon>Pentapetalae</taxon>
        <taxon>asterids</taxon>
        <taxon>lamiids</taxon>
        <taxon>Lamiales</taxon>
        <taxon>Orobanchaceae</taxon>
        <taxon>Pedicularideae</taxon>
        <taxon>Castillejinae</taxon>
        <taxon>Triphysaria</taxon>
    </lineage>
</organism>
<name>ASNS_TRIVS</name>
<proteinExistence type="evidence at transcript level"/>
<protein>
    <recommendedName>
        <fullName>Asparagine synthetase [glutamine-hydrolyzing]</fullName>
        <ecNumber>6.3.5.4</ecNumber>
    </recommendedName>
    <alternativeName>
        <fullName>Glutamine-dependent asparagine synthetase</fullName>
    </alternativeName>
</protein>
<sequence>MCGILAVLGCSDDSQAKRVRVLELSRRLKHRGPDWSGIHHHGDCYLAHQRLAIVDPASGDQPLFNEDKRIAVTVNGEIYNHEELRALLPNHKFRTGSDCDVIAHLYEEYGENFVEMLDGMFSFVLLDSRDNTFIAARDAFGITSLYIGWGLDGSVWISSELKGLHDECENFEVFPPGHVYSSKTEGFRRWYNPPWFSEAIPSTPYDPLVLRGAFEQAVIKRLMTDVPFGVLLSGGLDSSLVAAVTARHLAGTKAAKRWGSQLHSFCVGLEGSPDLKAGKEVADYLGTVHHEFLFTVQDGIDAIEDVIYHIETYDVTTIRASTPMFLMSRKIKSLGVKMVISGEGSDEIFGGYLYFHKAPNKEEFHRETCRKIKALHQYDCLRANKATSAWGLEARVPFLDKEFVNLAMSIDPEAKMIKPDQGRIEKWILRKAFDDEERPYLPKHILYRQKEQFSDGVGYSWIDGLKAHAEQHVTDKMMLNAGHIFPHNTPTTKEGYYYRMIFERFFPQNSAKLTVPGGPSVACSTATAVAWDASWSKNLDPSGRAATGVHDLAYENHVPIGNLKSKKMDSVSLGNAVGPQELTIRS</sequence>